<organism>
    <name type="scientific">Calycanthus floridus</name>
    <name type="common">Eastern sweetshrub</name>
    <dbReference type="NCBI Taxonomy" id="3429"/>
    <lineage>
        <taxon>Eukaryota</taxon>
        <taxon>Viridiplantae</taxon>
        <taxon>Streptophyta</taxon>
        <taxon>Embryophyta</taxon>
        <taxon>Tracheophyta</taxon>
        <taxon>Spermatophyta</taxon>
        <taxon>Magnoliopsida</taxon>
        <taxon>Magnoliidae</taxon>
        <taxon>Laurales</taxon>
        <taxon>Calycanthaceae</taxon>
        <taxon>Calycanthus</taxon>
    </lineage>
</organism>
<sequence>MLTITSYFGFLLAALTITSALLIGLNKIRLI</sequence>
<reference key="1">
    <citation type="journal article" date="2004" name="Nucleic Acids Res.">
        <title>Rapid evolution of RNA editing sites in a small non-essential plastid gene.</title>
        <authorList>
            <person name="Fiebig A."/>
            <person name="Stegemann S."/>
            <person name="Bock R."/>
        </authorList>
    </citation>
    <scope>NUCLEOTIDE SEQUENCE [GENOMIC DNA]</scope>
    <scope>RNA EDITING</scope>
    <source>
        <tissue>Leaf</tissue>
    </source>
</reference>
<evidence type="ECO:0000255" key="1">
    <source>
        <dbReference type="HAMAP-Rule" id="MF_00433"/>
    </source>
</evidence>
<evidence type="ECO:0000269" key="2">
    <source>
    </source>
</evidence>
<name>PETL_CALFL</name>
<feature type="chain" id="PRO_0000220441" description="Cytochrome b6-f complex subunit 6">
    <location>
        <begin position="1"/>
        <end position="31"/>
    </location>
</feature>
<feature type="transmembrane region" description="Helical" evidence="1">
    <location>
        <begin position="4"/>
        <end position="24"/>
    </location>
</feature>
<geneLocation type="chloroplast"/>
<gene>
    <name evidence="1" type="primary">petL</name>
</gene>
<keyword id="KW-0150">Chloroplast</keyword>
<keyword id="KW-0249">Electron transport</keyword>
<keyword id="KW-0472">Membrane</keyword>
<keyword id="KW-0602">Photosynthesis</keyword>
<keyword id="KW-0934">Plastid</keyword>
<keyword id="KW-0691">RNA editing</keyword>
<keyword id="KW-0793">Thylakoid</keyword>
<keyword id="KW-0812">Transmembrane</keyword>
<keyword id="KW-1133">Transmembrane helix</keyword>
<keyword id="KW-0813">Transport</keyword>
<comment type="function">
    <text evidence="1">Component of the cytochrome b6-f complex, which mediates electron transfer between photosystem II (PSII) and photosystem I (PSI), cyclic electron flow around PSI, and state transitions. PetL is important for photoautotrophic growth as well as for electron transfer efficiency and stability of the cytochrome b6-f complex.</text>
</comment>
<comment type="subunit">
    <text evidence="1">The 4 large subunits of the cytochrome b6-f complex are cytochrome b6, subunit IV (17 kDa polypeptide, PetD), cytochrome f and the Rieske protein, while the 4 small subunits are PetG, PetL, PetM and PetN. The complex functions as a dimer.</text>
</comment>
<comment type="subcellular location">
    <subcellularLocation>
        <location evidence="1">Plastid</location>
        <location evidence="1">Chloroplast thylakoid membrane</location>
        <topology evidence="1">Single-pass membrane protein</topology>
    </subcellularLocation>
</comment>
<comment type="RNA editing">
    <location>
        <position position="2" evidence="2"/>
    </location>
    <location>
        <position position="15" evidence="2"/>
    </location>
    <location>
        <position position="19" evidence="2"/>
    </location>
</comment>
<comment type="similarity">
    <text evidence="1">Belongs to the PetL family.</text>
</comment>
<protein>
    <recommendedName>
        <fullName evidence="1">Cytochrome b6-f complex subunit 6</fullName>
    </recommendedName>
    <alternativeName>
        <fullName evidence="1">Cytochrome b6-f complex subunit PetL</fullName>
    </alternativeName>
    <alternativeName>
        <fullName evidence="1">Cytochrome b6-f complex subunit VI</fullName>
    </alternativeName>
</protein>
<proteinExistence type="evidence at transcript level"/>
<dbReference type="EMBL" id="AJ704418">
    <property type="protein sequence ID" value="CAG28630.1"/>
    <property type="molecule type" value="Genomic_DNA"/>
</dbReference>
<dbReference type="SMR" id="Q5K3U6"/>
<dbReference type="GO" id="GO:0009535">
    <property type="term" value="C:chloroplast thylakoid membrane"/>
    <property type="evidence" value="ECO:0007669"/>
    <property type="project" value="UniProtKB-SubCell"/>
</dbReference>
<dbReference type="GO" id="GO:0009512">
    <property type="term" value="C:cytochrome b6f complex"/>
    <property type="evidence" value="ECO:0007669"/>
    <property type="project" value="InterPro"/>
</dbReference>
<dbReference type="GO" id="GO:0045158">
    <property type="term" value="F:electron transporter, transferring electrons within cytochrome b6/f complex of photosystem II activity"/>
    <property type="evidence" value="ECO:0007669"/>
    <property type="project" value="UniProtKB-UniRule"/>
</dbReference>
<dbReference type="GO" id="GO:0015979">
    <property type="term" value="P:photosynthesis"/>
    <property type="evidence" value="ECO:0007669"/>
    <property type="project" value="UniProtKB-KW"/>
</dbReference>
<dbReference type="HAMAP" id="MF_00433">
    <property type="entry name" value="Cytb6_f_PetL"/>
    <property type="match status" value="1"/>
</dbReference>
<dbReference type="InterPro" id="IPR007802">
    <property type="entry name" value="Cyt_b6/f_cplx_su6"/>
</dbReference>
<dbReference type="PANTHER" id="PTHR37266">
    <property type="entry name" value="CYTOCHROME B6-F COMPLEX SUBUNIT 6"/>
    <property type="match status" value="1"/>
</dbReference>
<dbReference type="PANTHER" id="PTHR37266:SF1">
    <property type="entry name" value="CYTOCHROME B6-F COMPLEX SUBUNIT 6"/>
    <property type="match status" value="1"/>
</dbReference>
<dbReference type="Pfam" id="PF05115">
    <property type="entry name" value="PetL"/>
    <property type="match status" value="1"/>
</dbReference>
<dbReference type="SUPFAM" id="SSF103436">
    <property type="entry name" value="PetL subunit of the cytochrome b6f complex"/>
    <property type="match status" value="1"/>
</dbReference>
<accession>Q5K3U6</accession>